<accession>Q3SZB7</accession>
<reference key="1">
    <citation type="submission" date="2005-08" db="EMBL/GenBank/DDBJ databases">
        <authorList>
            <consortium name="NIH - Mammalian Gene Collection (MGC) project"/>
        </authorList>
    </citation>
    <scope>NUCLEOTIDE SEQUENCE [LARGE SCALE MRNA]</scope>
    <source>
        <strain>Crossbred X Angus</strain>
        <tissue>Liver</tissue>
    </source>
</reference>
<evidence type="ECO:0000250" key="1"/>
<evidence type="ECO:0000250" key="2">
    <source>
        <dbReference type="UniProtKB" id="P00636"/>
    </source>
</evidence>
<evidence type="ECO:0000250" key="3">
    <source>
        <dbReference type="UniProtKB" id="P09467"/>
    </source>
</evidence>
<evidence type="ECO:0000250" key="4">
    <source>
        <dbReference type="UniProtKB" id="P19112"/>
    </source>
</evidence>
<evidence type="ECO:0000250" key="5">
    <source>
        <dbReference type="UniProtKB" id="Q9QXD6"/>
    </source>
</evidence>
<evidence type="ECO:0000305" key="6"/>
<proteinExistence type="evidence at transcript level"/>
<dbReference type="EC" id="3.1.3.11" evidence="4"/>
<dbReference type="EMBL" id="BC102974">
    <property type="protein sequence ID" value="AAI02975.1"/>
    <property type="molecule type" value="mRNA"/>
</dbReference>
<dbReference type="RefSeq" id="NP_001029619.1">
    <property type="nucleotide sequence ID" value="NM_001034447.2"/>
</dbReference>
<dbReference type="SMR" id="Q3SZB7"/>
<dbReference type="FunCoup" id="Q3SZB7">
    <property type="interactions" value="1474"/>
</dbReference>
<dbReference type="STRING" id="9913.ENSBTAP00000012835"/>
<dbReference type="PaxDb" id="9913-ENSBTAP00000012835"/>
<dbReference type="PeptideAtlas" id="Q3SZB7"/>
<dbReference type="Ensembl" id="ENSBTAT00000012835.4">
    <property type="protein sequence ID" value="ENSBTAP00000012835.2"/>
    <property type="gene ID" value="ENSBTAG00000009733.4"/>
</dbReference>
<dbReference type="GeneID" id="513483"/>
<dbReference type="KEGG" id="bta:513483"/>
<dbReference type="CTD" id="2203"/>
<dbReference type="VEuPathDB" id="HostDB:ENSBTAG00000009733"/>
<dbReference type="VGNC" id="VGNC:28887">
    <property type="gene designation" value="FBP1"/>
</dbReference>
<dbReference type="eggNOG" id="KOG1458">
    <property type="taxonomic scope" value="Eukaryota"/>
</dbReference>
<dbReference type="GeneTree" id="ENSGT00390000015513"/>
<dbReference type="HOGENOM" id="CLU_039977_1_0_1"/>
<dbReference type="InParanoid" id="Q3SZB7"/>
<dbReference type="OMA" id="YIPENCP"/>
<dbReference type="OrthoDB" id="10256725at2759"/>
<dbReference type="TreeFam" id="TF314824"/>
<dbReference type="Reactome" id="R-BTA-70263">
    <property type="pathway name" value="Gluconeogenesis"/>
</dbReference>
<dbReference type="SABIO-RK" id="Q3SZB7"/>
<dbReference type="UniPathway" id="UPA00138"/>
<dbReference type="Proteomes" id="UP000009136">
    <property type="component" value="Chromosome 8"/>
</dbReference>
<dbReference type="Bgee" id="ENSBTAG00000009733">
    <property type="expression patterns" value="Expressed in cortex of kidney and 104 other cell types or tissues"/>
</dbReference>
<dbReference type="GO" id="GO:0005737">
    <property type="term" value="C:cytoplasm"/>
    <property type="evidence" value="ECO:0000250"/>
    <property type="project" value="UniProtKB"/>
</dbReference>
<dbReference type="GO" id="GO:0005829">
    <property type="term" value="C:cytosol"/>
    <property type="evidence" value="ECO:0000318"/>
    <property type="project" value="GO_Central"/>
</dbReference>
<dbReference type="GO" id="GO:0016208">
    <property type="term" value="F:AMP binding"/>
    <property type="evidence" value="ECO:0000250"/>
    <property type="project" value="UniProtKB"/>
</dbReference>
<dbReference type="GO" id="GO:0042132">
    <property type="term" value="F:fructose 1,6-bisphosphate 1-phosphatase activity"/>
    <property type="evidence" value="ECO:0000250"/>
    <property type="project" value="UniProtKB"/>
</dbReference>
<dbReference type="GO" id="GO:0042802">
    <property type="term" value="F:identical protein binding"/>
    <property type="evidence" value="ECO:0000250"/>
    <property type="project" value="UniProtKB"/>
</dbReference>
<dbReference type="GO" id="GO:0046872">
    <property type="term" value="F:metal ion binding"/>
    <property type="evidence" value="ECO:0000250"/>
    <property type="project" value="UniProtKB"/>
</dbReference>
<dbReference type="GO" id="GO:0048029">
    <property type="term" value="F:monosaccharide binding"/>
    <property type="evidence" value="ECO:0000250"/>
    <property type="project" value="UniProtKB"/>
</dbReference>
<dbReference type="GO" id="GO:0071286">
    <property type="term" value="P:cellular response to magnesium ion"/>
    <property type="evidence" value="ECO:0000250"/>
    <property type="project" value="UniProtKB"/>
</dbReference>
<dbReference type="GO" id="GO:0071466">
    <property type="term" value="P:cellular response to xenobiotic stimulus"/>
    <property type="evidence" value="ECO:0000250"/>
    <property type="project" value="UniProtKB"/>
</dbReference>
<dbReference type="GO" id="GO:0030388">
    <property type="term" value="P:fructose 1,6-bisphosphate metabolic process"/>
    <property type="evidence" value="ECO:0000318"/>
    <property type="project" value="GO_Central"/>
</dbReference>
<dbReference type="GO" id="GO:0006002">
    <property type="term" value="P:fructose 6-phosphate metabolic process"/>
    <property type="evidence" value="ECO:0000250"/>
    <property type="project" value="UniProtKB"/>
</dbReference>
<dbReference type="GO" id="GO:0006000">
    <property type="term" value="P:fructose metabolic process"/>
    <property type="evidence" value="ECO:0000318"/>
    <property type="project" value="GO_Central"/>
</dbReference>
<dbReference type="GO" id="GO:0006094">
    <property type="term" value="P:gluconeogenesis"/>
    <property type="evidence" value="ECO:0000250"/>
    <property type="project" value="UniProtKB"/>
</dbReference>
<dbReference type="GO" id="GO:0030308">
    <property type="term" value="P:negative regulation of cell growth"/>
    <property type="evidence" value="ECO:0000250"/>
    <property type="project" value="UniProtKB"/>
</dbReference>
<dbReference type="GO" id="GO:0045820">
    <property type="term" value="P:negative regulation of glycolytic process"/>
    <property type="evidence" value="ECO:0000250"/>
    <property type="project" value="UniProtKB"/>
</dbReference>
<dbReference type="GO" id="GO:0046580">
    <property type="term" value="P:negative regulation of Ras protein signal transduction"/>
    <property type="evidence" value="ECO:0000250"/>
    <property type="project" value="UniProtKB"/>
</dbReference>
<dbReference type="GO" id="GO:0006111">
    <property type="term" value="P:regulation of gluconeogenesis"/>
    <property type="evidence" value="ECO:0000250"/>
    <property type="project" value="UniProtKB"/>
</dbReference>
<dbReference type="CDD" id="cd00354">
    <property type="entry name" value="FBPase"/>
    <property type="match status" value="1"/>
</dbReference>
<dbReference type="FunFam" id="3.30.540.10:FF:000037">
    <property type="entry name" value="Fructose-1,6-bisphosphatase 1"/>
    <property type="match status" value="1"/>
</dbReference>
<dbReference type="FunFam" id="3.40.190.80:FF:000001">
    <property type="entry name" value="Fructose-1,6-bisphosphatase class 1"/>
    <property type="match status" value="1"/>
</dbReference>
<dbReference type="Gene3D" id="3.40.190.80">
    <property type="match status" value="1"/>
</dbReference>
<dbReference type="Gene3D" id="3.30.540.10">
    <property type="entry name" value="Fructose-1,6-Bisphosphatase, subunit A, domain 1"/>
    <property type="match status" value="1"/>
</dbReference>
<dbReference type="HAMAP" id="MF_01855">
    <property type="entry name" value="FBPase_class1"/>
    <property type="match status" value="1"/>
</dbReference>
<dbReference type="InterPro" id="IPR044015">
    <property type="entry name" value="FBPase_C_dom"/>
</dbReference>
<dbReference type="InterPro" id="IPR000146">
    <property type="entry name" value="FBPase_class-1"/>
</dbReference>
<dbReference type="InterPro" id="IPR033391">
    <property type="entry name" value="FBPase_N"/>
</dbReference>
<dbReference type="InterPro" id="IPR028343">
    <property type="entry name" value="FBPtase"/>
</dbReference>
<dbReference type="InterPro" id="IPR020548">
    <property type="entry name" value="Fructose_bisphosphatase_AS"/>
</dbReference>
<dbReference type="NCBIfam" id="NF006778">
    <property type="entry name" value="PRK09293.1-1"/>
    <property type="match status" value="1"/>
</dbReference>
<dbReference type="PANTHER" id="PTHR11556:SF11">
    <property type="entry name" value="FRUCTOSE-1,6-BISPHOSPHATASE 1"/>
    <property type="match status" value="1"/>
</dbReference>
<dbReference type="PANTHER" id="PTHR11556">
    <property type="entry name" value="FRUCTOSE-1,6-BISPHOSPHATASE-RELATED"/>
    <property type="match status" value="1"/>
</dbReference>
<dbReference type="Pfam" id="PF00316">
    <property type="entry name" value="FBPase"/>
    <property type="match status" value="1"/>
</dbReference>
<dbReference type="Pfam" id="PF18913">
    <property type="entry name" value="FBPase_C"/>
    <property type="match status" value="1"/>
</dbReference>
<dbReference type="PIRSF" id="PIRSF500210">
    <property type="entry name" value="FBPtase"/>
    <property type="match status" value="1"/>
</dbReference>
<dbReference type="PIRSF" id="PIRSF000904">
    <property type="entry name" value="FBPtase_SBPase"/>
    <property type="match status" value="1"/>
</dbReference>
<dbReference type="PRINTS" id="PR00115">
    <property type="entry name" value="F16BPHPHTASE"/>
</dbReference>
<dbReference type="SUPFAM" id="SSF56655">
    <property type="entry name" value="Carbohydrate phosphatase"/>
    <property type="match status" value="1"/>
</dbReference>
<dbReference type="PROSITE" id="PS00124">
    <property type="entry name" value="FBPASE"/>
    <property type="match status" value="1"/>
</dbReference>
<comment type="function">
    <text evidence="3">Catalyzes the hydrolysis of fructose 1,6-bisphosphate to fructose 6-phosphate in the presence of divalent cations, acting as a rate-limiting enzyme in gluconeogenesis. Plays a role in regulating glucose sensing and insulin secretion of pancreatic beta-cells. Appears to modulate glycerol gluconeogenesis in liver. Important regulator of appetite and adiposity; increased expression of the protein in liver after nutrient excess increases circulating satiety hormones and reduces appetite-stimulating neuropeptides and thus seems to provide a feedback mechanism to limit weight gain.</text>
</comment>
<comment type="catalytic activity">
    <reaction evidence="4">
        <text>beta-D-fructose 1,6-bisphosphate + H2O = beta-D-fructose 6-phosphate + phosphate</text>
        <dbReference type="Rhea" id="RHEA:11064"/>
        <dbReference type="ChEBI" id="CHEBI:15377"/>
        <dbReference type="ChEBI" id="CHEBI:32966"/>
        <dbReference type="ChEBI" id="CHEBI:43474"/>
        <dbReference type="ChEBI" id="CHEBI:57634"/>
        <dbReference type="EC" id="3.1.3.11"/>
    </reaction>
</comment>
<comment type="cofactor">
    <cofactor evidence="2">
        <name>Mg(2+)</name>
        <dbReference type="ChEBI" id="CHEBI:18420"/>
    </cofactor>
    <text evidence="2">Binds 3 Mg(2+) ions per subunit.</text>
</comment>
<comment type="activity regulation">
    <text evidence="1">Subject to complex allosteric regulation. The enzyme can assume an active R-state, or an inactive T-state. Intermediate conformations may exist. AMP acts as an allosteric inhibitor. AMP binding affects the turnover of bound substrate and not the affinity for substrate. Fructose 2,6-bisphosphate acts as a competitive inhibitor. Fructose 2,6-bisphosphate and AMP have synergistic effects (By similarity).</text>
</comment>
<comment type="pathway">
    <text>Carbohydrate biosynthesis; gluconeogenesis.</text>
</comment>
<comment type="subunit">
    <text evidence="2">Homotetramer.</text>
</comment>
<comment type="similarity">
    <text evidence="6">Belongs to the FBPase class 1 family.</text>
</comment>
<feature type="initiator methionine" description="Removed" evidence="2">
    <location>
        <position position="1"/>
    </location>
</feature>
<feature type="chain" id="PRO_0000247322" description="Fructose-1,6-bisphosphatase 1">
    <location>
        <begin position="2"/>
        <end position="338"/>
    </location>
</feature>
<feature type="binding site" evidence="2">
    <location>
        <begin position="18"/>
        <end position="22"/>
    </location>
    <ligand>
        <name>AMP</name>
        <dbReference type="ChEBI" id="CHEBI:456215"/>
    </ligand>
</feature>
<feature type="binding site" evidence="2">
    <location>
        <begin position="28"/>
        <end position="32"/>
    </location>
    <ligand>
        <name>AMP</name>
        <dbReference type="ChEBI" id="CHEBI:456215"/>
    </ligand>
</feature>
<feature type="binding site" evidence="2">
    <location>
        <position position="69"/>
    </location>
    <ligand>
        <name>Mg(2+)</name>
        <dbReference type="ChEBI" id="CHEBI:18420"/>
        <label>1</label>
    </ligand>
</feature>
<feature type="binding site" evidence="2">
    <location>
        <position position="98"/>
    </location>
    <ligand>
        <name>Mg(2+)</name>
        <dbReference type="ChEBI" id="CHEBI:18420"/>
        <label>1</label>
    </ligand>
</feature>
<feature type="binding site" evidence="2">
    <location>
        <position position="98"/>
    </location>
    <ligand>
        <name>Mg(2+)</name>
        <dbReference type="ChEBI" id="CHEBI:18420"/>
        <label>2</label>
    </ligand>
</feature>
<feature type="binding site" evidence="2">
    <location>
        <begin position="113"/>
        <end position="114"/>
    </location>
    <ligand>
        <name>AMP</name>
        <dbReference type="ChEBI" id="CHEBI:456215"/>
    </ligand>
</feature>
<feature type="binding site" evidence="2">
    <location>
        <position position="119"/>
    </location>
    <ligand>
        <name>Mg(2+)</name>
        <dbReference type="ChEBI" id="CHEBI:18420"/>
        <label>2</label>
    </ligand>
</feature>
<feature type="binding site" evidence="2">
    <location>
        <position position="119"/>
    </location>
    <ligand>
        <name>Mg(2+)</name>
        <dbReference type="ChEBI" id="CHEBI:18420"/>
        <label>3</label>
    </ligand>
</feature>
<feature type="binding site" evidence="2">
    <location>
        <position position="121"/>
    </location>
    <ligand>
        <name>Mg(2+)</name>
        <dbReference type="ChEBI" id="CHEBI:18420"/>
        <label>2</label>
    </ligand>
</feature>
<feature type="binding site" evidence="2">
    <location>
        <begin position="122"/>
        <end position="125"/>
    </location>
    <ligand>
        <name>substrate</name>
    </ligand>
</feature>
<feature type="binding site" evidence="2">
    <location>
        <position position="122"/>
    </location>
    <ligand>
        <name>Mg(2+)</name>
        <dbReference type="ChEBI" id="CHEBI:18420"/>
        <label>3</label>
    </ligand>
</feature>
<feature type="binding site">
    <location>
        <position position="141"/>
    </location>
    <ligand>
        <name>AMP</name>
        <dbReference type="ChEBI" id="CHEBI:456215"/>
    </ligand>
</feature>
<feature type="binding site" evidence="2">
    <location>
        <begin position="213"/>
        <end position="216"/>
    </location>
    <ligand>
        <name>substrate</name>
    </ligand>
</feature>
<feature type="binding site" evidence="2">
    <location>
        <begin position="244"/>
        <end position="249"/>
    </location>
    <ligand>
        <name>substrate</name>
    </ligand>
</feature>
<feature type="binding site" evidence="2">
    <location>
        <position position="265"/>
    </location>
    <ligand>
        <name>substrate</name>
    </ligand>
</feature>
<feature type="binding site" evidence="2">
    <location>
        <begin position="275"/>
        <end position="277"/>
    </location>
    <ligand>
        <name>substrate</name>
    </ligand>
</feature>
<feature type="binding site" evidence="2">
    <location>
        <position position="281"/>
    </location>
    <ligand>
        <name>Mg(2+)</name>
        <dbReference type="ChEBI" id="CHEBI:18420"/>
        <label>3</label>
    </ligand>
</feature>
<feature type="modified residue" description="N-acetylthreonine" evidence="2">
    <location>
        <position position="2"/>
    </location>
</feature>
<feature type="modified residue" description="N6-succinyllysine" evidence="5">
    <location>
        <position position="151"/>
    </location>
</feature>
<feature type="modified residue" description="Phosphoserine" evidence="2">
    <location>
        <position position="208"/>
    </location>
</feature>
<feature type="modified residue" description="Phosphotyrosine" evidence="5">
    <location>
        <position position="216"/>
    </location>
</feature>
<feature type="modified residue" description="Phosphotyrosine" evidence="5">
    <location>
        <position position="245"/>
    </location>
</feature>
<feature type="modified residue" description="Phosphotyrosine" evidence="3">
    <location>
        <position position="265"/>
    </location>
</feature>
<protein>
    <recommendedName>
        <fullName>Fructose-1,6-bisphosphatase 1</fullName>
        <shortName>FBPase 1</shortName>
        <ecNumber evidence="4">3.1.3.11</ecNumber>
    </recommendedName>
    <alternativeName>
        <fullName>D-fructose-1,6-bisphosphate 1-phosphohydrolase 1</fullName>
    </alternativeName>
    <alternativeName>
        <fullName>Liver FBPase</fullName>
    </alternativeName>
</protein>
<gene>
    <name type="primary">FBP1</name>
</gene>
<keyword id="KW-0007">Acetylation</keyword>
<keyword id="KW-0021">Allosteric enzyme</keyword>
<keyword id="KW-0119">Carbohydrate metabolism</keyword>
<keyword id="KW-0312">Gluconeogenesis</keyword>
<keyword id="KW-0378">Hydrolase</keyword>
<keyword id="KW-0460">Magnesium</keyword>
<keyword id="KW-0479">Metal-binding</keyword>
<keyword id="KW-0597">Phosphoprotein</keyword>
<keyword id="KW-1185">Reference proteome</keyword>
<name>F16P1_BOVIN</name>
<organism>
    <name type="scientific">Bos taurus</name>
    <name type="common">Bovine</name>
    <dbReference type="NCBI Taxonomy" id="9913"/>
    <lineage>
        <taxon>Eukaryota</taxon>
        <taxon>Metazoa</taxon>
        <taxon>Chordata</taxon>
        <taxon>Craniata</taxon>
        <taxon>Vertebrata</taxon>
        <taxon>Euteleostomi</taxon>
        <taxon>Mammalia</taxon>
        <taxon>Eutheria</taxon>
        <taxon>Laurasiatheria</taxon>
        <taxon>Artiodactyla</taxon>
        <taxon>Ruminantia</taxon>
        <taxon>Pecora</taxon>
        <taxon>Bovidae</taxon>
        <taxon>Bovinae</taxon>
        <taxon>Bos</taxon>
    </lineage>
</organism>
<sequence length="338" mass="36728">MTDQAAFDTNIVTVTRFVMEEGRKARGTGEMTQLLNSLCTAVKAISTAVRKAGIAHLYGIAGTTNVTGDQVKKLDVLSNDLVVNVLKSSFATCVLVSEEDEHAIIVEPEKRGKYVVCFDPLDGSSNIDCLVSIGTIFGIYKKISKDDPSEKDALQPGRNLVAAGYALYGSATMLVLAMANGVNCFMLDPAIGEFILVDRDVKIKKKGSIYSLNEGYAKDFDPALTEYVQRKKFPPDNSAPYGARYVGSMVADVHRTLVYGGIFMYPANKKSPSGKLRLLYECNPMAYVIEKAGGMATTGKETVLDIVPTDIHQKSPIILGSPEDVTEFLEIYKKHAAK</sequence>